<keyword id="KW-0165">Cleavage on pair of basic residues</keyword>
<keyword id="KW-1015">Disulfide bond</keyword>
<keyword id="KW-0872">Ion channel impairing toxin</keyword>
<keyword id="KW-0960">Knottin</keyword>
<keyword id="KW-0528">Neurotoxin</keyword>
<keyword id="KW-0638">Presynaptic neurotoxin</keyword>
<keyword id="KW-0964">Secreted</keyword>
<keyword id="KW-0732">Signal</keyword>
<keyword id="KW-0800">Toxin</keyword>
<keyword id="KW-0738">Voltage-gated sodium channel impairing toxin</keyword>
<organism>
    <name type="scientific">Conus consors</name>
    <name type="common">Singed cone</name>
    <dbReference type="NCBI Taxonomy" id="101297"/>
    <lineage>
        <taxon>Eukaryota</taxon>
        <taxon>Metazoa</taxon>
        <taxon>Spiralia</taxon>
        <taxon>Lophotrochozoa</taxon>
        <taxon>Mollusca</taxon>
        <taxon>Gastropoda</taxon>
        <taxon>Caenogastropoda</taxon>
        <taxon>Neogastropoda</taxon>
        <taxon>Conoidea</taxon>
        <taxon>Conidae</taxon>
        <taxon>Conus</taxon>
        <taxon>Pionoconus</taxon>
    </lineage>
</organism>
<protein>
    <recommendedName>
        <fullName>Delta-conotoxin-like CnVIA</fullName>
        <shortName>Delta-CnVIA</shortName>
    </recommendedName>
</protein>
<dbReference type="EMBL" id="DJ379501">
    <property type="status" value="NOT_ANNOTATED_CDS"/>
    <property type="molecule type" value="Unassigned_DNA"/>
</dbReference>
<dbReference type="ConoServer" id="1626">
    <property type="toxin name" value="CnVIA"/>
</dbReference>
<dbReference type="GO" id="GO:0005576">
    <property type="term" value="C:extracellular region"/>
    <property type="evidence" value="ECO:0007669"/>
    <property type="project" value="UniProtKB-SubCell"/>
</dbReference>
<dbReference type="GO" id="GO:0044231">
    <property type="term" value="C:host cell presynaptic membrane"/>
    <property type="evidence" value="ECO:0007669"/>
    <property type="project" value="UniProtKB-KW"/>
</dbReference>
<dbReference type="GO" id="GO:0019871">
    <property type="term" value="F:sodium channel inhibitor activity"/>
    <property type="evidence" value="ECO:0007669"/>
    <property type="project" value="InterPro"/>
</dbReference>
<dbReference type="GO" id="GO:0090729">
    <property type="term" value="F:toxin activity"/>
    <property type="evidence" value="ECO:0007669"/>
    <property type="project" value="UniProtKB-KW"/>
</dbReference>
<dbReference type="InterPro" id="IPR004214">
    <property type="entry name" value="Conotoxin"/>
</dbReference>
<dbReference type="InterPro" id="IPR012322">
    <property type="entry name" value="Conotoxin_d-typ_CS"/>
</dbReference>
<dbReference type="InterPro" id="IPR012321">
    <property type="entry name" value="Conotoxin_omega-typ_CS"/>
</dbReference>
<dbReference type="Pfam" id="PF02950">
    <property type="entry name" value="Conotoxin"/>
    <property type="match status" value="1"/>
</dbReference>
<dbReference type="PROSITE" id="PS60005">
    <property type="entry name" value="DELTA_CONOTOXIN"/>
    <property type="match status" value="1"/>
</dbReference>
<reference key="1">
    <citation type="patent" date="2003-11-11" number="JP2003533178">
        <title>O-superfamily conotoxin peptides.</title>
        <authorList>
            <person name="Hillyard D.R."/>
            <person name="Mcintosh M.J."/>
            <person name="Jones R.M."/>
            <person name="Cartier E.G."/>
            <person name="Watkins M."/>
            <person name="Olivera B.M."/>
            <person name="Layer R.T."/>
        </authorList>
    </citation>
    <scope>NUCLEOTIDE SEQUENCE</scope>
</reference>
<reference key="2">
    <citation type="journal article" date="2001" name="Biochemistry">
        <title>Delta-conotoxin structure/function through a cladistic analysis.</title>
        <authorList>
            <person name="Bulaj G."/>
            <person name="DeLaCruz R."/>
            <person name="Azimi-Zonooz A."/>
            <person name="West P."/>
            <person name="Watkins M."/>
            <person name="Yoshikami D."/>
            <person name="Olivera B.M."/>
        </authorList>
    </citation>
    <scope>NUCLEOTIDE SEQUENCE [MRNA] OF 52-82</scope>
    <source>
        <tissue>Venom duct</tissue>
    </source>
</reference>
<reference key="3">
    <citation type="journal article" date="2009" name="J. Proteomics">
        <title>Comparative proteomic study of the venom of the piscivorous cone snail Conus consors.</title>
        <authorList>
            <person name="Biass D."/>
            <person name="Dutertre S."/>
            <person name="Gerbault A."/>
            <person name="Menou J.L."/>
            <person name="Offord R."/>
            <person name="Favreau P."/>
            <person name="Stocklin R."/>
        </authorList>
    </citation>
    <scope>MISCELLANEOUS</scope>
</reference>
<evidence type="ECO:0000250" key="1"/>
<evidence type="ECO:0000255" key="2"/>
<evidence type="ECO:0000305" key="3"/>
<name>O16A_CONCN</name>
<comment type="function">
    <text evidence="1">Delta-conotoxins bind to site 6 of voltage-gated sodium channels (Nav) and inhibit the inactivation process.</text>
</comment>
<comment type="subcellular location">
    <subcellularLocation>
        <location evidence="1">Secreted</location>
    </subcellularLocation>
</comment>
<comment type="tissue specificity">
    <text>Expressed by the venom duct.</text>
</comment>
<comment type="domain">
    <text evidence="1">The presence of a 'disulfide through disulfide knot' structurally defines this protein as a knottin.</text>
</comment>
<comment type="domain">
    <text>The cysteine framework is VI/VII (C-C-CC-C-C).</text>
</comment>
<comment type="miscellaneous">
    <text>Found in the dissected venom (DV), but not in the injectable (milked) venom (IV).</text>
</comment>
<comment type="similarity">
    <text evidence="3">Belongs to the conotoxin O1 superfamily.</text>
</comment>
<proteinExistence type="evidence at transcript level"/>
<feature type="signal peptide" evidence="2">
    <location>
        <begin position="1"/>
        <end position="22"/>
    </location>
</feature>
<feature type="propeptide" id="PRO_0000392697" evidence="1">
    <location>
        <begin position="23"/>
        <end position="49"/>
    </location>
</feature>
<feature type="peptide" id="PRO_0000044867" description="Delta-conotoxin-like CnVIA">
    <location>
        <begin position="52"/>
        <end position="82"/>
    </location>
</feature>
<feature type="disulfide bond" evidence="1">
    <location>
        <begin position="54"/>
        <end position="69"/>
    </location>
</feature>
<feature type="disulfide bond" evidence="1">
    <location>
        <begin position="61"/>
        <end position="73"/>
    </location>
</feature>
<feature type="disulfide bond" evidence="1">
    <location>
        <begin position="68"/>
        <end position="78"/>
    </location>
</feature>
<sequence length="82" mass="9132">MKLTCMMIVAVLFLTAWTFVTADDSRNGLENLSPKARHEMKNPEASKSNKRYECYSTGTFCGINGGLCCSNLCLFFVCLTFS</sequence>
<accession>P69750</accession>